<dbReference type="EMBL" id="CU329672">
    <property type="protein sequence ID" value="CAA20741.1"/>
    <property type="molecule type" value="Genomic_DNA"/>
</dbReference>
<dbReference type="PIR" id="T41092">
    <property type="entry name" value="T41092"/>
</dbReference>
<dbReference type="SMR" id="O74447"/>
<dbReference type="BioGRID" id="275481">
    <property type="interactions" value="5"/>
</dbReference>
<dbReference type="iPTMnet" id="O74447"/>
<dbReference type="PaxDb" id="4896-SPCC16C4.02c.1"/>
<dbReference type="EnsemblFungi" id="SPCC16C4.02c.1">
    <property type="protein sequence ID" value="SPCC16C4.02c.1:pep"/>
    <property type="gene ID" value="SPCC16C4.02c"/>
</dbReference>
<dbReference type="KEGG" id="spo:2538903"/>
<dbReference type="PomBase" id="SPCC16C4.02c"/>
<dbReference type="VEuPathDB" id="FungiDB:SPCC16C4.02c"/>
<dbReference type="eggNOG" id="ENOG502S540">
    <property type="taxonomic scope" value="Eukaryota"/>
</dbReference>
<dbReference type="HOGENOM" id="CLU_497108_0_0_1"/>
<dbReference type="InParanoid" id="O74447"/>
<dbReference type="OMA" id="CFAWLNS"/>
<dbReference type="PhylomeDB" id="O74447"/>
<dbReference type="PRO" id="PR:O74447"/>
<dbReference type="Proteomes" id="UP000002485">
    <property type="component" value="Chromosome III"/>
</dbReference>
<dbReference type="GO" id="GO:0032153">
    <property type="term" value="C:cell division site"/>
    <property type="evidence" value="ECO:0007005"/>
    <property type="project" value="PomBase"/>
</dbReference>
<dbReference type="GO" id="GO:0044732">
    <property type="term" value="C:mitotic spindle pole body"/>
    <property type="evidence" value="ECO:0007005"/>
    <property type="project" value="PomBase"/>
</dbReference>
<dbReference type="GO" id="GO:0005634">
    <property type="term" value="C:nucleus"/>
    <property type="evidence" value="ECO:0007005"/>
    <property type="project" value="PomBase"/>
</dbReference>
<dbReference type="InterPro" id="IPR016024">
    <property type="entry name" value="ARM-type_fold"/>
</dbReference>
<dbReference type="InterPro" id="IPR008709">
    <property type="entry name" value="Neurochondrin"/>
</dbReference>
<dbReference type="PANTHER" id="PTHR13109">
    <property type="entry name" value="NEUROCHONDRIN"/>
    <property type="match status" value="1"/>
</dbReference>
<dbReference type="PANTHER" id="PTHR13109:SF7">
    <property type="entry name" value="NEUROCHONDRIN"/>
    <property type="match status" value="1"/>
</dbReference>
<dbReference type="Pfam" id="PF05536">
    <property type="entry name" value="Neurochondrin"/>
    <property type="match status" value="2"/>
</dbReference>
<dbReference type="SUPFAM" id="SSF48371">
    <property type="entry name" value="ARM repeat"/>
    <property type="match status" value="1"/>
</dbReference>
<sequence length="548" mass="63037">MHIPHFHLHKGPKGVRTISYEQLLSEDDSYASEKLSEDHVTEVHFVTDKDEDSNASGESRGSMELLENCFSLLHAQDDTSKFVSLTMLAKLLNDHPNLIFKCWERMDMKFLDRLLLSTHYEYVDLGVSILLAFCSEEAILRSYEVKKRVSTLLQCCLKHYDLCIPVICTLSSNPKSAKYLLYYTSFIINEFPFEQAFEILSNALYALDNVQTYMRPIFQGIDKRRGWKLDCTFSFFSDLFSRFPVQSWYSEAIRANLQPLMDAVVERFITDKNLSSATVILSNLLKAAGPASIMPNDGFMILVIGRCSAEIRGSLGMLVKAVGQKGKHGTVSYTVCECYEVLGLLIRYLCENCDVLAQRIEPDKFFQLQRSLTELFSDTMDFLRDAWDNNKNRDNLASHVTVISAVATLCLWLTEDDSQYAQASGLMDIFVYLWRHSWSNGIDYAKWISVALPSMLSNKVFFKAFKDFDAWKVVYDDFIKCNDDLKGDKSFNDYILSTNEEDGEDERLAQAIQDFHILIQLNSLVPQSIWNDDIWQEPYWKNLLESNF</sequence>
<name>YCG2_SCHPO</name>
<accession>O74447</accession>
<keyword id="KW-0597">Phosphoprotein</keyword>
<keyword id="KW-1185">Reference proteome</keyword>
<reference key="1">
    <citation type="journal article" date="2002" name="Nature">
        <title>The genome sequence of Schizosaccharomyces pombe.</title>
        <authorList>
            <person name="Wood V."/>
            <person name="Gwilliam R."/>
            <person name="Rajandream M.A."/>
            <person name="Lyne M.H."/>
            <person name="Lyne R."/>
            <person name="Stewart A."/>
            <person name="Sgouros J.G."/>
            <person name="Peat N."/>
            <person name="Hayles J."/>
            <person name="Baker S.G."/>
            <person name="Basham D."/>
            <person name="Bowman S."/>
            <person name="Brooks K."/>
            <person name="Brown D."/>
            <person name="Brown S."/>
            <person name="Chillingworth T."/>
            <person name="Churcher C.M."/>
            <person name="Collins M."/>
            <person name="Connor R."/>
            <person name="Cronin A."/>
            <person name="Davis P."/>
            <person name="Feltwell T."/>
            <person name="Fraser A."/>
            <person name="Gentles S."/>
            <person name="Goble A."/>
            <person name="Hamlin N."/>
            <person name="Harris D.E."/>
            <person name="Hidalgo J."/>
            <person name="Hodgson G."/>
            <person name="Holroyd S."/>
            <person name="Hornsby T."/>
            <person name="Howarth S."/>
            <person name="Huckle E.J."/>
            <person name="Hunt S."/>
            <person name="Jagels K."/>
            <person name="James K.D."/>
            <person name="Jones L."/>
            <person name="Jones M."/>
            <person name="Leather S."/>
            <person name="McDonald S."/>
            <person name="McLean J."/>
            <person name="Mooney P."/>
            <person name="Moule S."/>
            <person name="Mungall K.L."/>
            <person name="Murphy L.D."/>
            <person name="Niblett D."/>
            <person name="Odell C."/>
            <person name="Oliver K."/>
            <person name="O'Neil S."/>
            <person name="Pearson D."/>
            <person name="Quail M.A."/>
            <person name="Rabbinowitsch E."/>
            <person name="Rutherford K.M."/>
            <person name="Rutter S."/>
            <person name="Saunders D."/>
            <person name="Seeger K."/>
            <person name="Sharp S."/>
            <person name="Skelton J."/>
            <person name="Simmonds M.N."/>
            <person name="Squares R."/>
            <person name="Squares S."/>
            <person name="Stevens K."/>
            <person name="Taylor K."/>
            <person name="Taylor R.G."/>
            <person name="Tivey A."/>
            <person name="Walsh S.V."/>
            <person name="Warren T."/>
            <person name="Whitehead S."/>
            <person name="Woodward J.R."/>
            <person name="Volckaert G."/>
            <person name="Aert R."/>
            <person name="Robben J."/>
            <person name="Grymonprez B."/>
            <person name="Weltjens I."/>
            <person name="Vanstreels E."/>
            <person name="Rieger M."/>
            <person name="Schaefer M."/>
            <person name="Mueller-Auer S."/>
            <person name="Gabel C."/>
            <person name="Fuchs M."/>
            <person name="Duesterhoeft A."/>
            <person name="Fritzc C."/>
            <person name="Holzer E."/>
            <person name="Moestl D."/>
            <person name="Hilbert H."/>
            <person name="Borzym K."/>
            <person name="Langer I."/>
            <person name="Beck A."/>
            <person name="Lehrach H."/>
            <person name="Reinhardt R."/>
            <person name="Pohl T.M."/>
            <person name="Eger P."/>
            <person name="Zimmermann W."/>
            <person name="Wedler H."/>
            <person name="Wambutt R."/>
            <person name="Purnelle B."/>
            <person name="Goffeau A."/>
            <person name="Cadieu E."/>
            <person name="Dreano S."/>
            <person name="Gloux S."/>
            <person name="Lelaure V."/>
            <person name="Mottier S."/>
            <person name="Galibert F."/>
            <person name="Aves S.J."/>
            <person name="Xiang Z."/>
            <person name="Hunt C."/>
            <person name="Moore K."/>
            <person name="Hurst S.M."/>
            <person name="Lucas M."/>
            <person name="Rochet M."/>
            <person name="Gaillardin C."/>
            <person name="Tallada V.A."/>
            <person name="Garzon A."/>
            <person name="Thode G."/>
            <person name="Daga R.R."/>
            <person name="Cruzado L."/>
            <person name="Jimenez J."/>
            <person name="Sanchez M."/>
            <person name="del Rey F."/>
            <person name="Benito J."/>
            <person name="Dominguez A."/>
            <person name="Revuelta J.L."/>
            <person name="Moreno S."/>
            <person name="Armstrong J."/>
            <person name="Forsburg S.L."/>
            <person name="Cerutti L."/>
            <person name="Lowe T."/>
            <person name="McCombie W.R."/>
            <person name="Paulsen I."/>
            <person name="Potashkin J."/>
            <person name="Shpakovski G.V."/>
            <person name="Ussery D."/>
            <person name="Barrell B.G."/>
            <person name="Nurse P."/>
        </authorList>
    </citation>
    <scope>NUCLEOTIDE SEQUENCE [LARGE SCALE GENOMIC DNA]</scope>
    <source>
        <strain>972 / ATCC 24843</strain>
    </source>
</reference>
<reference key="2">
    <citation type="journal article" date="2008" name="J. Proteome Res.">
        <title>Phosphoproteome analysis of fission yeast.</title>
        <authorList>
            <person name="Wilson-Grady J.T."/>
            <person name="Villen J."/>
            <person name="Gygi S.P."/>
        </authorList>
    </citation>
    <scope>PHOSPHORYLATION [LARGE SCALE ANALYSIS] AT SER-19; SER-25 AND THR-47</scope>
    <scope>IDENTIFICATION BY MASS SPECTROMETRY</scope>
</reference>
<proteinExistence type="evidence at protein level"/>
<protein>
    <recommendedName>
        <fullName>Uncharacterized protein C16C4.02c</fullName>
    </recommendedName>
</protein>
<feature type="chain" id="PRO_0000116544" description="Uncharacterized protein C16C4.02c">
    <location>
        <begin position="1"/>
        <end position="548"/>
    </location>
</feature>
<feature type="modified residue" description="Phosphoserine" evidence="1">
    <location>
        <position position="19"/>
    </location>
</feature>
<feature type="modified residue" description="Phosphoserine" evidence="1">
    <location>
        <position position="25"/>
    </location>
</feature>
<feature type="modified residue" description="Phosphothreonine" evidence="1">
    <location>
        <position position="47"/>
    </location>
</feature>
<gene>
    <name type="ORF">SPCC16C4.02c</name>
</gene>
<organism>
    <name type="scientific">Schizosaccharomyces pombe (strain 972 / ATCC 24843)</name>
    <name type="common">Fission yeast</name>
    <dbReference type="NCBI Taxonomy" id="284812"/>
    <lineage>
        <taxon>Eukaryota</taxon>
        <taxon>Fungi</taxon>
        <taxon>Dikarya</taxon>
        <taxon>Ascomycota</taxon>
        <taxon>Taphrinomycotina</taxon>
        <taxon>Schizosaccharomycetes</taxon>
        <taxon>Schizosaccharomycetales</taxon>
        <taxon>Schizosaccharomycetaceae</taxon>
        <taxon>Schizosaccharomyces</taxon>
    </lineage>
</organism>
<evidence type="ECO:0000269" key="1">
    <source>
    </source>
</evidence>